<reference key="1">
    <citation type="journal article" date="2006" name="Genome Biol.">
        <title>The genome of Rhizobium leguminosarum has recognizable core and accessory components.</title>
        <authorList>
            <person name="Young J.P.W."/>
            <person name="Crossman L.C."/>
            <person name="Johnston A.W.B."/>
            <person name="Thomson N.R."/>
            <person name="Ghazoui Z.F."/>
            <person name="Hull K.H."/>
            <person name="Wexler M."/>
            <person name="Curson A.R.J."/>
            <person name="Todd J.D."/>
            <person name="Poole P.S."/>
            <person name="Mauchline T.H."/>
            <person name="East A.K."/>
            <person name="Quail M.A."/>
            <person name="Churcher C."/>
            <person name="Arrowsmith C."/>
            <person name="Cherevach I."/>
            <person name="Chillingworth T."/>
            <person name="Clarke K."/>
            <person name="Cronin A."/>
            <person name="Davis P."/>
            <person name="Fraser A."/>
            <person name="Hance Z."/>
            <person name="Hauser H."/>
            <person name="Jagels K."/>
            <person name="Moule S."/>
            <person name="Mungall K."/>
            <person name="Norbertczak H."/>
            <person name="Rabbinowitsch E."/>
            <person name="Sanders M."/>
            <person name="Simmonds M."/>
            <person name="Whitehead S."/>
            <person name="Parkhill J."/>
        </authorList>
    </citation>
    <scope>NUCLEOTIDE SEQUENCE [LARGE SCALE GENOMIC DNA]</scope>
    <source>
        <strain>DSM 114642 / LMG 32736 / 3841</strain>
    </source>
</reference>
<accession>Q1MA75</accession>
<keyword id="KW-0028">Amino-acid biosynthesis</keyword>
<keyword id="KW-0067">ATP-binding</keyword>
<keyword id="KW-0963">Cytoplasm</keyword>
<keyword id="KW-0418">Kinase</keyword>
<keyword id="KW-0547">Nucleotide-binding</keyword>
<keyword id="KW-0641">Proline biosynthesis</keyword>
<keyword id="KW-0808">Transferase</keyword>
<sequence length="389" mass="40783">MTSRKPLGRYRRIVIKIGSALLVDRKAGLKKAWLDAMCADISGLKAKGIDVLVVSSGAIALGRSVLDLPSGALKLEESQAAAAVGQIALARAWSESLSRDEIVAGQILLTLGDTEERRRYLNARATINQLLKIGAVPIINENDTVATSEIRYGDNDRLAARVATMTGADLLILLSDIDGLYTAPPHLDPNATFLETIAEITPEIEAMAGGAASELSRGGMRTKIDAGKIATASGCAMIIASGKTENPLSAIENGARSSWFAPSGTPVTARKTWIAGQLQPAGELHVDDGAVTALGAGKSLLPAGVRSVSGLFSRGDTVAIIGPAGREIARGLVSYDADDARRIAGRKSAEIETILGYPGRAAMVHRDDMVMTAQIGSKSERQKKDASYA</sequence>
<comment type="function">
    <text evidence="1">Catalyzes the transfer of a phosphate group to glutamate to form L-glutamate 5-phosphate.</text>
</comment>
<comment type="catalytic activity">
    <reaction evidence="1">
        <text>L-glutamate + ATP = L-glutamyl 5-phosphate + ADP</text>
        <dbReference type="Rhea" id="RHEA:14877"/>
        <dbReference type="ChEBI" id="CHEBI:29985"/>
        <dbReference type="ChEBI" id="CHEBI:30616"/>
        <dbReference type="ChEBI" id="CHEBI:58274"/>
        <dbReference type="ChEBI" id="CHEBI:456216"/>
        <dbReference type="EC" id="2.7.2.11"/>
    </reaction>
</comment>
<comment type="pathway">
    <text evidence="1">Amino-acid biosynthesis; L-proline biosynthesis; L-glutamate 5-semialdehyde from L-glutamate: step 1/2.</text>
</comment>
<comment type="subcellular location">
    <subcellularLocation>
        <location evidence="1">Cytoplasm</location>
    </subcellularLocation>
</comment>
<comment type="similarity">
    <text evidence="1">Belongs to the glutamate 5-kinase family.</text>
</comment>
<comment type="sequence caution" evidence="2">
    <conflict type="erroneous initiation">
        <sequence resource="EMBL-CDS" id="CAK10165"/>
    </conflict>
</comment>
<dbReference type="EC" id="2.7.2.11" evidence="1"/>
<dbReference type="EMBL" id="AM236080">
    <property type="protein sequence ID" value="CAK10165.1"/>
    <property type="status" value="ALT_INIT"/>
    <property type="molecule type" value="Genomic_DNA"/>
</dbReference>
<dbReference type="RefSeq" id="WP_028742672.1">
    <property type="nucleotide sequence ID" value="NC_008380.1"/>
</dbReference>
<dbReference type="SMR" id="Q1MA75"/>
<dbReference type="EnsemblBacteria" id="CAK10165">
    <property type="protein sequence ID" value="CAK10165"/>
    <property type="gene ID" value="RL4682"/>
</dbReference>
<dbReference type="KEGG" id="rle:RL4682"/>
<dbReference type="eggNOG" id="COG0263">
    <property type="taxonomic scope" value="Bacteria"/>
</dbReference>
<dbReference type="HOGENOM" id="CLU_025400_2_0_5"/>
<dbReference type="UniPathway" id="UPA00098">
    <property type="reaction ID" value="UER00359"/>
</dbReference>
<dbReference type="Proteomes" id="UP000006575">
    <property type="component" value="Chromosome"/>
</dbReference>
<dbReference type="GO" id="GO:0005829">
    <property type="term" value="C:cytosol"/>
    <property type="evidence" value="ECO:0007669"/>
    <property type="project" value="TreeGrafter"/>
</dbReference>
<dbReference type="GO" id="GO:0005524">
    <property type="term" value="F:ATP binding"/>
    <property type="evidence" value="ECO:0007669"/>
    <property type="project" value="UniProtKB-KW"/>
</dbReference>
<dbReference type="GO" id="GO:0004349">
    <property type="term" value="F:glutamate 5-kinase activity"/>
    <property type="evidence" value="ECO:0007669"/>
    <property type="project" value="UniProtKB-UniRule"/>
</dbReference>
<dbReference type="GO" id="GO:0003723">
    <property type="term" value="F:RNA binding"/>
    <property type="evidence" value="ECO:0007669"/>
    <property type="project" value="InterPro"/>
</dbReference>
<dbReference type="GO" id="GO:0055129">
    <property type="term" value="P:L-proline biosynthetic process"/>
    <property type="evidence" value="ECO:0007669"/>
    <property type="project" value="UniProtKB-UniRule"/>
</dbReference>
<dbReference type="CDD" id="cd04242">
    <property type="entry name" value="AAK_G5K_ProB"/>
    <property type="match status" value="1"/>
</dbReference>
<dbReference type="CDD" id="cd21157">
    <property type="entry name" value="PUA_G5K"/>
    <property type="match status" value="1"/>
</dbReference>
<dbReference type="FunFam" id="2.30.130.10:FF:000007">
    <property type="entry name" value="Glutamate 5-kinase"/>
    <property type="match status" value="1"/>
</dbReference>
<dbReference type="FunFam" id="3.40.1160.10:FF:000018">
    <property type="entry name" value="Glutamate 5-kinase"/>
    <property type="match status" value="1"/>
</dbReference>
<dbReference type="Gene3D" id="3.40.1160.10">
    <property type="entry name" value="Acetylglutamate kinase-like"/>
    <property type="match status" value="1"/>
</dbReference>
<dbReference type="Gene3D" id="2.30.130.10">
    <property type="entry name" value="PUA domain"/>
    <property type="match status" value="1"/>
</dbReference>
<dbReference type="HAMAP" id="MF_00456">
    <property type="entry name" value="ProB"/>
    <property type="match status" value="1"/>
</dbReference>
<dbReference type="InterPro" id="IPR036393">
    <property type="entry name" value="AceGlu_kinase-like_sf"/>
</dbReference>
<dbReference type="InterPro" id="IPR001048">
    <property type="entry name" value="Asp/Glu/Uridylate_kinase"/>
</dbReference>
<dbReference type="InterPro" id="IPR041739">
    <property type="entry name" value="G5K_ProB"/>
</dbReference>
<dbReference type="InterPro" id="IPR001057">
    <property type="entry name" value="Glu/AcGlu_kinase"/>
</dbReference>
<dbReference type="InterPro" id="IPR011529">
    <property type="entry name" value="Glu_5kinase"/>
</dbReference>
<dbReference type="InterPro" id="IPR005715">
    <property type="entry name" value="Glu_5kinase/COase_Synthase"/>
</dbReference>
<dbReference type="InterPro" id="IPR019797">
    <property type="entry name" value="Glutamate_5-kinase_CS"/>
</dbReference>
<dbReference type="InterPro" id="IPR002478">
    <property type="entry name" value="PUA"/>
</dbReference>
<dbReference type="InterPro" id="IPR015947">
    <property type="entry name" value="PUA-like_sf"/>
</dbReference>
<dbReference type="InterPro" id="IPR036974">
    <property type="entry name" value="PUA_sf"/>
</dbReference>
<dbReference type="NCBIfam" id="TIGR01027">
    <property type="entry name" value="proB"/>
    <property type="match status" value="1"/>
</dbReference>
<dbReference type="PANTHER" id="PTHR43654">
    <property type="entry name" value="GLUTAMATE 5-KINASE"/>
    <property type="match status" value="1"/>
</dbReference>
<dbReference type="PANTHER" id="PTHR43654:SF1">
    <property type="entry name" value="ISOPENTENYL PHOSPHATE KINASE"/>
    <property type="match status" value="1"/>
</dbReference>
<dbReference type="Pfam" id="PF00696">
    <property type="entry name" value="AA_kinase"/>
    <property type="match status" value="1"/>
</dbReference>
<dbReference type="Pfam" id="PF01472">
    <property type="entry name" value="PUA"/>
    <property type="match status" value="1"/>
</dbReference>
<dbReference type="PIRSF" id="PIRSF000729">
    <property type="entry name" value="GK"/>
    <property type="match status" value="1"/>
</dbReference>
<dbReference type="PRINTS" id="PR00474">
    <property type="entry name" value="GLU5KINASE"/>
</dbReference>
<dbReference type="SMART" id="SM00359">
    <property type="entry name" value="PUA"/>
    <property type="match status" value="1"/>
</dbReference>
<dbReference type="SUPFAM" id="SSF53633">
    <property type="entry name" value="Carbamate kinase-like"/>
    <property type="match status" value="1"/>
</dbReference>
<dbReference type="SUPFAM" id="SSF88697">
    <property type="entry name" value="PUA domain-like"/>
    <property type="match status" value="1"/>
</dbReference>
<dbReference type="PROSITE" id="PS00902">
    <property type="entry name" value="GLUTAMATE_5_KINASE"/>
    <property type="match status" value="1"/>
</dbReference>
<dbReference type="PROSITE" id="PS50890">
    <property type="entry name" value="PUA"/>
    <property type="match status" value="1"/>
</dbReference>
<name>PROB_RHIJ3</name>
<feature type="chain" id="PRO_0000252993" description="Glutamate 5-kinase">
    <location>
        <begin position="1"/>
        <end position="389"/>
    </location>
</feature>
<feature type="domain" description="PUA" evidence="1">
    <location>
        <begin position="281"/>
        <end position="358"/>
    </location>
</feature>
<feature type="binding site" evidence="1">
    <location>
        <position position="16"/>
    </location>
    <ligand>
        <name>ATP</name>
        <dbReference type="ChEBI" id="CHEBI:30616"/>
    </ligand>
</feature>
<feature type="binding site" evidence="1">
    <location>
        <position position="56"/>
    </location>
    <ligand>
        <name>substrate</name>
    </ligand>
</feature>
<feature type="binding site" evidence="1">
    <location>
        <position position="143"/>
    </location>
    <ligand>
        <name>substrate</name>
    </ligand>
</feature>
<feature type="binding site" evidence="1">
    <location>
        <position position="155"/>
    </location>
    <ligand>
        <name>substrate</name>
    </ligand>
</feature>
<feature type="binding site" evidence="1">
    <location>
        <begin position="175"/>
        <end position="176"/>
    </location>
    <ligand>
        <name>ATP</name>
        <dbReference type="ChEBI" id="CHEBI:30616"/>
    </ligand>
</feature>
<proteinExistence type="inferred from homology"/>
<organism>
    <name type="scientific">Rhizobium johnstonii (strain DSM 114642 / LMG 32736 / 3841)</name>
    <name type="common">Rhizobium leguminosarum bv. viciae</name>
    <dbReference type="NCBI Taxonomy" id="216596"/>
    <lineage>
        <taxon>Bacteria</taxon>
        <taxon>Pseudomonadati</taxon>
        <taxon>Pseudomonadota</taxon>
        <taxon>Alphaproteobacteria</taxon>
        <taxon>Hyphomicrobiales</taxon>
        <taxon>Rhizobiaceae</taxon>
        <taxon>Rhizobium/Agrobacterium group</taxon>
        <taxon>Rhizobium</taxon>
        <taxon>Rhizobium johnstonii</taxon>
    </lineage>
</organism>
<gene>
    <name evidence="1" type="primary">proB</name>
    <name type="ordered locus">RL4682</name>
</gene>
<evidence type="ECO:0000255" key="1">
    <source>
        <dbReference type="HAMAP-Rule" id="MF_00456"/>
    </source>
</evidence>
<evidence type="ECO:0000305" key="2"/>
<protein>
    <recommendedName>
        <fullName evidence="1">Glutamate 5-kinase</fullName>
        <ecNumber evidence="1">2.7.2.11</ecNumber>
    </recommendedName>
    <alternativeName>
        <fullName evidence="1">Gamma-glutamyl kinase</fullName>
        <shortName evidence="1">GK</shortName>
    </alternativeName>
</protein>